<accession>Q1KXT7</accession>
<evidence type="ECO:0000255" key="1">
    <source>
        <dbReference type="HAMAP-Rule" id="MF_00270"/>
    </source>
</evidence>
<evidence type="ECO:0000305" key="2"/>
<keyword id="KW-0150">Chloroplast</keyword>
<keyword id="KW-0934">Plastid</keyword>
<keyword id="KW-0687">Ribonucleoprotein</keyword>
<keyword id="KW-0689">Ribosomal protein</keyword>
<keyword id="KW-0694">RNA-binding</keyword>
<keyword id="KW-0699">rRNA-binding</keyword>
<proteinExistence type="inferred from homology"/>
<geneLocation type="chloroplast"/>
<reference key="1">
    <citation type="submission" date="2006-01" db="EMBL/GenBank/DDBJ databases">
        <title>A comparison of the first two published chloroplast genomes in Asteraceae: Lactuca and Helianthus.</title>
        <authorList>
            <person name="Timme R.E."/>
            <person name="Kuehl J.V."/>
            <person name="Boore J.L."/>
            <person name="Jansen R.K."/>
        </authorList>
    </citation>
    <scope>NUCLEOTIDE SEQUENCE [LARGE SCALE GENOMIC DNA]</scope>
    <source>
        <strain>cv. HA383</strain>
    </source>
</reference>
<organism>
    <name type="scientific">Helianthus annuus</name>
    <name type="common">Common sunflower</name>
    <dbReference type="NCBI Taxonomy" id="4232"/>
    <lineage>
        <taxon>Eukaryota</taxon>
        <taxon>Viridiplantae</taxon>
        <taxon>Streptophyta</taxon>
        <taxon>Embryophyta</taxon>
        <taxon>Tracheophyta</taxon>
        <taxon>Spermatophyta</taxon>
        <taxon>Magnoliopsida</taxon>
        <taxon>eudicotyledons</taxon>
        <taxon>Gunneridae</taxon>
        <taxon>Pentapetalae</taxon>
        <taxon>asterids</taxon>
        <taxon>campanulids</taxon>
        <taxon>Asterales</taxon>
        <taxon>Asteraceae</taxon>
        <taxon>Asteroideae</taxon>
        <taxon>Heliantheae alliance</taxon>
        <taxon>Heliantheae</taxon>
        <taxon>Helianthus</taxon>
    </lineage>
</organism>
<feature type="chain" id="PRO_0000276872" description="Small ribosomal subunit protein bS18c">
    <location>
        <begin position="1"/>
        <end position="101"/>
    </location>
</feature>
<dbReference type="EMBL" id="DQ383815">
    <property type="protein sequence ID" value="ABD47168.1"/>
    <property type="molecule type" value="Genomic_DNA"/>
</dbReference>
<dbReference type="RefSeq" id="YP_588139.1">
    <property type="nucleotide sequence ID" value="NC_007977.1"/>
</dbReference>
<dbReference type="SMR" id="Q1KXT7"/>
<dbReference type="EnsemblPlants" id="mRNA:HanXRQr2_Chr01g0006021">
    <property type="protein sequence ID" value="CDS:HanXRQr2_Chr01g0006021.1"/>
    <property type="gene ID" value="HanXRQr2_Chr01g0006021"/>
</dbReference>
<dbReference type="GeneID" id="4055610"/>
<dbReference type="Gramene" id="mRNA:HanXRQr2_Chr01g0006021">
    <property type="protein sequence ID" value="CDS:HanXRQr2_Chr01g0006021.1"/>
    <property type="gene ID" value="HanXRQr2_Chr01g0006021"/>
</dbReference>
<dbReference type="KEGG" id="han:4055610"/>
<dbReference type="OrthoDB" id="21463at2759"/>
<dbReference type="GO" id="GO:0009507">
    <property type="term" value="C:chloroplast"/>
    <property type="evidence" value="ECO:0007669"/>
    <property type="project" value="UniProtKB-SubCell"/>
</dbReference>
<dbReference type="GO" id="GO:1990904">
    <property type="term" value="C:ribonucleoprotein complex"/>
    <property type="evidence" value="ECO:0007669"/>
    <property type="project" value="UniProtKB-KW"/>
</dbReference>
<dbReference type="GO" id="GO:0005840">
    <property type="term" value="C:ribosome"/>
    <property type="evidence" value="ECO:0007669"/>
    <property type="project" value="UniProtKB-KW"/>
</dbReference>
<dbReference type="GO" id="GO:0019843">
    <property type="term" value="F:rRNA binding"/>
    <property type="evidence" value="ECO:0007669"/>
    <property type="project" value="UniProtKB-UniRule"/>
</dbReference>
<dbReference type="GO" id="GO:0003735">
    <property type="term" value="F:structural constituent of ribosome"/>
    <property type="evidence" value="ECO:0007669"/>
    <property type="project" value="InterPro"/>
</dbReference>
<dbReference type="GO" id="GO:0006412">
    <property type="term" value="P:translation"/>
    <property type="evidence" value="ECO:0007669"/>
    <property type="project" value="UniProtKB-UniRule"/>
</dbReference>
<dbReference type="FunFam" id="4.10.640.10:FF:000002">
    <property type="entry name" value="30S ribosomal protein S18, chloroplastic"/>
    <property type="match status" value="1"/>
</dbReference>
<dbReference type="Gene3D" id="4.10.640.10">
    <property type="entry name" value="Ribosomal protein S18"/>
    <property type="match status" value="1"/>
</dbReference>
<dbReference type="HAMAP" id="MF_00270">
    <property type="entry name" value="Ribosomal_bS18"/>
    <property type="match status" value="1"/>
</dbReference>
<dbReference type="InterPro" id="IPR001648">
    <property type="entry name" value="Ribosomal_bS18"/>
</dbReference>
<dbReference type="InterPro" id="IPR018275">
    <property type="entry name" value="Ribosomal_bS18_CS"/>
</dbReference>
<dbReference type="InterPro" id="IPR036870">
    <property type="entry name" value="Ribosomal_bS18_sf"/>
</dbReference>
<dbReference type="NCBIfam" id="TIGR00165">
    <property type="entry name" value="S18"/>
    <property type="match status" value="1"/>
</dbReference>
<dbReference type="PANTHER" id="PTHR13479">
    <property type="entry name" value="30S RIBOSOMAL PROTEIN S18"/>
    <property type="match status" value="1"/>
</dbReference>
<dbReference type="PANTHER" id="PTHR13479:SF40">
    <property type="entry name" value="SMALL RIBOSOMAL SUBUNIT PROTEIN BS18M"/>
    <property type="match status" value="1"/>
</dbReference>
<dbReference type="Pfam" id="PF01084">
    <property type="entry name" value="Ribosomal_S18"/>
    <property type="match status" value="1"/>
</dbReference>
<dbReference type="PRINTS" id="PR00974">
    <property type="entry name" value="RIBOSOMALS18"/>
</dbReference>
<dbReference type="SUPFAM" id="SSF46911">
    <property type="entry name" value="Ribosomal protein S18"/>
    <property type="match status" value="1"/>
</dbReference>
<dbReference type="PROSITE" id="PS00057">
    <property type="entry name" value="RIBOSOMAL_S18"/>
    <property type="match status" value="1"/>
</dbReference>
<protein>
    <recommendedName>
        <fullName evidence="1">Small ribosomal subunit protein bS18c</fullName>
    </recommendedName>
    <alternativeName>
        <fullName evidence="2">30S ribosomal protein S18, chloroplastic</fullName>
    </alternativeName>
</protein>
<comment type="subunit">
    <text>Part of the 30S ribosomal subunit.</text>
</comment>
<comment type="subcellular location">
    <subcellularLocation>
        <location>Plastid</location>
        <location>Chloroplast</location>
    </subcellularLocation>
</comment>
<comment type="similarity">
    <text evidence="1">Belongs to the bacterial ribosomal protein bS18 family.</text>
</comment>
<gene>
    <name evidence="1" type="primary">rps18</name>
</gene>
<name>RR18_HELAN</name>
<sequence>MDKSKRTFLKSKRSFRKRLPPIQSGDRIDYKNMSLISRFISEQGKILSRRVNRLTLKQQRLITIAIKQARILSLLPFLNNEKQFERTESTTRTPSLRARKR</sequence>